<organism>
    <name type="scientific">Rhizobium radiobacter</name>
    <name type="common">Agrobacterium tumefaciens</name>
    <name type="synonym">Agrobacterium radiobacter</name>
    <dbReference type="NCBI Taxonomy" id="358"/>
    <lineage>
        <taxon>Bacteria</taxon>
        <taxon>Pseudomonadati</taxon>
        <taxon>Pseudomonadota</taxon>
        <taxon>Alphaproteobacteria</taxon>
        <taxon>Hyphomicrobiales</taxon>
        <taxon>Rhizobiaceae</taxon>
        <taxon>Rhizobium/Agrobacterium group</taxon>
        <taxon>Agrobacterium</taxon>
        <taxon>Agrobacterium tumefaciens complex</taxon>
    </lineage>
</organism>
<evidence type="ECO:0000255" key="1">
    <source>
        <dbReference type="PROSITE-ProRule" id="PRU00411"/>
    </source>
</evidence>
<evidence type="ECO:0000305" key="2"/>
<evidence type="ECO:0007829" key="3">
    <source>
        <dbReference type="PDB" id="1L3L"/>
    </source>
</evidence>
<proteinExistence type="evidence at protein level"/>
<dbReference type="EMBL" id="L08596">
    <property type="protein sequence ID" value="AAA64793.1"/>
    <property type="status" value="ALT_SEQ"/>
    <property type="molecule type" value="Genomic_DNA"/>
</dbReference>
<dbReference type="EMBL" id="AF242881">
    <property type="protein sequence ID" value="AAC28121.1"/>
    <property type="molecule type" value="Genomic_DNA"/>
</dbReference>
<dbReference type="RefSeq" id="NP_059701.1">
    <property type="nucleotide sequence ID" value="NC_002377.1"/>
</dbReference>
<dbReference type="RefSeq" id="WP_010892389.1">
    <property type="nucleotide sequence ID" value="NZ_QSNU01000012.1"/>
</dbReference>
<dbReference type="PDB" id="1H0M">
    <property type="method" value="X-ray"/>
    <property type="resolution" value="3.00 A"/>
    <property type="chains" value="A/B/C/D=1-234"/>
</dbReference>
<dbReference type="PDB" id="1L3L">
    <property type="method" value="X-ray"/>
    <property type="resolution" value="1.66 A"/>
    <property type="chains" value="A/B/C/D=1-234"/>
</dbReference>
<dbReference type="PDBsum" id="1H0M"/>
<dbReference type="PDBsum" id="1L3L"/>
<dbReference type="SMR" id="P33905"/>
<dbReference type="BindingDB" id="P33905"/>
<dbReference type="ChEMBL" id="CHEMBL5865"/>
<dbReference type="DrugBank" id="DB08081">
    <property type="generic name" value="3-OXO-OCTANOIC ACID (2-OXO-TETRAHYDRO-FURAN-3-YL)-AMIDE"/>
</dbReference>
<dbReference type="OrthoDB" id="9803630at2"/>
<dbReference type="EvolutionaryTrace" id="P33905"/>
<dbReference type="PRO" id="PR:P33905"/>
<dbReference type="CollecTF" id="EXPREG_00000a40"/>
<dbReference type="GO" id="GO:0032993">
    <property type="term" value="C:protein-DNA complex"/>
    <property type="evidence" value="ECO:0000315"/>
    <property type="project" value="CollecTF"/>
</dbReference>
<dbReference type="GO" id="GO:0001216">
    <property type="term" value="F:DNA-binding transcription activator activity"/>
    <property type="evidence" value="ECO:0000315"/>
    <property type="project" value="CollecTF"/>
</dbReference>
<dbReference type="GO" id="GO:0000976">
    <property type="term" value="F:transcription cis-regulatory region binding"/>
    <property type="evidence" value="ECO:0000315"/>
    <property type="project" value="CollecTF"/>
</dbReference>
<dbReference type="GO" id="GO:0009372">
    <property type="term" value="P:quorum sensing"/>
    <property type="evidence" value="ECO:0007669"/>
    <property type="project" value="UniProtKB-KW"/>
</dbReference>
<dbReference type="CDD" id="cd06170">
    <property type="entry name" value="LuxR_C_like"/>
    <property type="match status" value="1"/>
</dbReference>
<dbReference type="FunFam" id="3.30.450.80:FF:000001">
    <property type="entry name" value="Transcriptional activator protein TraR"/>
    <property type="match status" value="1"/>
</dbReference>
<dbReference type="Gene3D" id="3.30.450.80">
    <property type="entry name" value="Transcription factor LuxR-like, autoinducer-binding domain"/>
    <property type="match status" value="1"/>
</dbReference>
<dbReference type="Gene3D" id="1.10.10.10">
    <property type="entry name" value="Winged helix-like DNA-binding domain superfamily/Winged helix DNA-binding domain"/>
    <property type="match status" value="1"/>
</dbReference>
<dbReference type="InterPro" id="IPR016032">
    <property type="entry name" value="Sig_transdc_resp-reg_C-effctor"/>
</dbReference>
<dbReference type="InterPro" id="IPR005143">
    <property type="entry name" value="TF_LuxR_autoind-bd_dom"/>
</dbReference>
<dbReference type="InterPro" id="IPR036693">
    <property type="entry name" value="TF_LuxR_autoind-bd_dom_sf"/>
</dbReference>
<dbReference type="InterPro" id="IPR000792">
    <property type="entry name" value="Tscrpt_reg_LuxR_C"/>
</dbReference>
<dbReference type="InterPro" id="IPR036388">
    <property type="entry name" value="WH-like_DNA-bd_sf"/>
</dbReference>
<dbReference type="NCBIfam" id="NF010444">
    <property type="entry name" value="PRK13870.1"/>
    <property type="match status" value="1"/>
</dbReference>
<dbReference type="Pfam" id="PF03472">
    <property type="entry name" value="Autoind_bind"/>
    <property type="match status" value="1"/>
</dbReference>
<dbReference type="Pfam" id="PF00196">
    <property type="entry name" value="GerE"/>
    <property type="match status" value="1"/>
</dbReference>
<dbReference type="SMART" id="SM00421">
    <property type="entry name" value="HTH_LUXR"/>
    <property type="match status" value="1"/>
</dbReference>
<dbReference type="SUPFAM" id="SSF46894">
    <property type="entry name" value="C-terminal effector domain of the bipartite response regulators"/>
    <property type="match status" value="1"/>
</dbReference>
<dbReference type="SUPFAM" id="SSF75516">
    <property type="entry name" value="Pheromone-binding domain of LuxR-like quorum-sensing transcription factors"/>
    <property type="match status" value="1"/>
</dbReference>
<dbReference type="PROSITE" id="PS50043">
    <property type="entry name" value="HTH_LUXR_2"/>
    <property type="match status" value="1"/>
</dbReference>
<feature type="chain" id="PRO_0000184192" description="Transcriptional activator protein TraR">
    <location>
        <begin position="1"/>
        <end position="234"/>
    </location>
</feature>
<feature type="domain" description="HTH luxR-type" evidence="1">
    <location>
        <begin position="167"/>
        <end position="232"/>
    </location>
</feature>
<feature type="DNA-binding region" description="H-T-H motif" evidence="1">
    <location>
        <begin position="191"/>
        <end position="210"/>
    </location>
</feature>
<feature type="helix" evidence="3">
    <location>
        <begin position="4"/>
        <end position="11"/>
    </location>
</feature>
<feature type="helix" evidence="3">
    <location>
        <begin position="18"/>
        <end position="31"/>
    </location>
</feature>
<feature type="strand" evidence="3">
    <location>
        <begin position="35"/>
        <end position="43"/>
    </location>
</feature>
<feature type="strand" evidence="3">
    <location>
        <begin position="46"/>
        <end position="51"/>
    </location>
</feature>
<feature type="helix" evidence="3">
    <location>
        <begin position="55"/>
        <end position="63"/>
    </location>
</feature>
<feature type="helix" evidence="3">
    <location>
        <begin position="66"/>
        <end position="68"/>
    </location>
</feature>
<feature type="helix" evidence="3">
    <location>
        <begin position="71"/>
        <end position="78"/>
    </location>
</feature>
<feature type="strand" evidence="3">
    <location>
        <begin position="83"/>
        <end position="86"/>
    </location>
</feature>
<feature type="helix" evidence="3">
    <location>
        <begin position="87"/>
        <end position="90"/>
    </location>
</feature>
<feature type="turn" evidence="3">
    <location>
        <begin position="91"/>
        <end position="93"/>
    </location>
</feature>
<feature type="helix" evidence="3">
    <location>
        <begin position="96"/>
        <end position="106"/>
    </location>
</feature>
<feature type="turn" evidence="3">
    <location>
        <begin position="107"/>
        <end position="109"/>
    </location>
</feature>
<feature type="strand" evidence="3">
    <location>
        <begin position="111"/>
        <end position="119"/>
    </location>
</feature>
<feature type="helix" evidence="3">
    <location>
        <begin position="121"/>
        <end position="123"/>
    </location>
</feature>
<feature type="strand" evidence="3">
    <location>
        <begin position="125"/>
        <end position="136"/>
    </location>
</feature>
<feature type="helix" evidence="3">
    <location>
        <begin position="145"/>
        <end position="161"/>
    </location>
</feature>
<feature type="strand" evidence="3">
    <location>
        <begin position="167"/>
        <end position="169"/>
    </location>
</feature>
<feature type="helix" evidence="3">
    <location>
        <begin position="176"/>
        <end position="185"/>
    </location>
</feature>
<feature type="turn" evidence="3">
    <location>
        <begin position="186"/>
        <end position="188"/>
    </location>
</feature>
<feature type="helix" evidence="3">
    <location>
        <begin position="191"/>
        <end position="198"/>
    </location>
</feature>
<feature type="helix" evidence="3">
    <location>
        <begin position="202"/>
        <end position="216"/>
    </location>
</feature>
<feature type="helix" evidence="3">
    <location>
        <begin position="221"/>
        <end position="230"/>
    </location>
</feature>
<protein>
    <recommendedName>
        <fullName>Transcriptional activator protein TraR</fullName>
    </recommendedName>
</protein>
<sequence length="234" mass="26734">MQHWLDKLTDLAAIEGDECILKTGLADIADHFGFTGYAYLHIQHRHITAVTNYHRQWQSTYFDKKFEALDPVVKRARSRKHIFTWSGEHERPTLSKDERAFYDHASDFGIRSGITIPIKTANGFMSMFTMASDKPVIDLDREIDAVAAAATIGQIHARISFLRTTPTAEDAAWLDPKEATYLRWIAVGKTMEEIADVEGVKYNSVRVKLREAMKRFDVRSKAHLTALAIRRKLI</sequence>
<comment type="function">
    <text>Positive regulation of conjugal transfer of Ti plasmids. TraR activates target genes in the presence of AAI and also activates traR and traI themselves.</text>
</comment>
<comment type="similarity">
    <text evidence="2">Belongs to the autoinducer-regulated transcriptional regulatory protein family.</text>
</comment>
<keyword id="KW-0002">3D-structure</keyword>
<keyword id="KW-0010">Activator</keyword>
<keyword id="KW-0184">Conjugation</keyword>
<keyword id="KW-0238">DNA-binding</keyword>
<keyword id="KW-0614">Plasmid</keyword>
<keyword id="KW-0673">Quorum sensing</keyword>
<keyword id="KW-0804">Transcription</keyword>
<keyword id="KW-0805">Transcription regulation</keyword>
<reference key="1">
    <citation type="journal article" date="1994" name="J. Bacteriol.">
        <title>A LuxR-LuxI type regulatory system activates Agrobacterium Ti plasmid conjugal transfer in the presence of a plant tumor metabolite.</title>
        <authorList>
            <person name="Fuqua W.C. Jr."/>
            <person name="Winans S.C."/>
        </authorList>
    </citation>
    <scope>NUCLEOTIDE SEQUENCE [GENOMIC DNA]</scope>
    <source>
        <strain>A348</strain>
    </source>
</reference>
<reference key="2">
    <citation type="submission" date="1998-08" db="EMBL/GenBank/DDBJ databases">
        <authorList>
            <person name="Winans S.C."/>
        </authorList>
    </citation>
    <scope>SEQUENCE REVISION</scope>
</reference>
<name>TRAR_RHIRD</name>
<accession>P33905</accession>
<geneLocation type="plasmid">
    <name>pTiA6NC</name>
</geneLocation>
<gene>
    <name type="primary">traR</name>
</gene>